<name>G6PI_STRPF</name>
<feature type="chain" id="PRO_0000252653" description="Glucose-6-phosphate isomerase">
    <location>
        <begin position="1"/>
        <end position="449"/>
    </location>
</feature>
<feature type="active site" description="Proton donor" evidence="1">
    <location>
        <position position="291"/>
    </location>
</feature>
<feature type="active site" evidence="1">
    <location>
        <position position="312"/>
    </location>
</feature>
<feature type="active site" evidence="1">
    <location>
        <position position="426"/>
    </location>
</feature>
<gene>
    <name evidence="1" type="primary">pgi</name>
    <name type="ordered locus">MGAS10750_Spy0179</name>
</gene>
<proteinExistence type="inferred from homology"/>
<reference key="1">
    <citation type="journal article" date="2006" name="Proc. Natl. Acad. Sci. U.S.A.">
        <title>Molecular genetic anatomy of inter- and intraserotype variation in the human bacterial pathogen group A Streptococcus.</title>
        <authorList>
            <person name="Beres S.B."/>
            <person name="Richter E.W."/>
            <person name="Nagiec M.J."/>
            <person name="Sumby P."/>
            <person name="Porcella S.F."/>
            <person name="DeLeo F.R."/>
            <person name="Musser J.M."/>
        </authorList>
    </citation>
    <scope>NUCLEOTIDE SEQUENCE [LARGE SCALE GENOMIC DNA]</scope>
    <source>
        <strain>MGAS10750</strain>
    </source>
</reference>
<evidence type="ECO:0000255" key="1">
    <source>
        <dbReference type="HAMAP-Rule" id="MF_00473"/>
    </source>
</evidence>
<evidence type="ECO:0000305" key="2"/>
<keyword id="KW-0963">Cytoplasm</keyword>
<keyword id="KW-0312">Gluconeogenesis</keyword>
<keyword id="KW-0324">Glycolysis</keyword>
<keyword id="KW-0413">Isomerase</keyword>
<protein>
    <recommendedName>
        <fullName evidence="1">Glucose-6-phosphate isomerase</fullName>
        <shortName evidence="1">GPI</shortName>
        <ecNumber evidence="1">5.3.1.9</ecNumber>
    </recommendedName>
    <alternativeName>
        <fullName evidence="1">Phosphoglucose isomerase</fullName>
        <shortName evidence="1">PGI</shortName>
    </alternativeName>
    <alternativeName>
        <fullName evidence="1">Phosphohexose isomerase</fullName>
        <shortName evidence="1">PHI</shortName>
    </alternativeName>
</protein>
<dbReference type="EC" id="5.3.1.9" evidence="1"/>
<dbReference type="EMBL" id="CP000262">
    <property type="protein sequence ID" value="ABF37129.1"/>
    <property type="status" value="ALT_INIT"/>
    <property type="molecule type" value="Genomic_DNA"/>
</dbReference>
<dbReference type="SMR" id="Q1J8N2"/>
<dbReference type="KEGG" id="spi:MGAS10750_Spy0179"/>
<dbReference type="HOGENOM" id="CLU_037303_0_1_9"/>
<dbReference type="UniPathway" id="UPA00109">
    <property type="reaction ID" value="UER00181"/>
</dbReference>
<dbReference type="UniPathway" id="UPA00138"/>
<dbReference type="Proteomes" id="UP000002434">
    <property type="component" value="Chromosome"/>
</dbReference>
<dbReference type="GO" id="GO:0005829">
    <property type="term" value="C:cytosol"/>
    <property type="evidence" value="ECO:0007669"/>
    <property type="project" value="TreeGrafter"/>
</dbReference>
<dbReference type="GO" id="GO:0097367">
    <property type="term" value="F:carbohydrate derivative binding"/>
    <property type="evidence" value="ECO:0007669"/>
    <property type="project" value="InterPro"/>
</dbReference>
<dbReference type="GO" id="GO:0004347">
    <property type="term" value="F:glucose-6-phosphate isomerase activity"/>
    <property type="evidence" value="ECO:0007669"/>
    <property type="project" value="UniProtKB-UniRule"/>
</dbReference>
<dbReference type="GO" id="GO:0048029">
    <property type="term" value="F:monosaccharide binding"/>
    <property type="evidence" value="ECO:0007669"/>
    <property type="project" value="TreeGrafter"/>
</dbReference>
<dbReference type="GO" id="GO:0006094">
    <property type="term" value="P:gluconeogenesis"/>
    <property type="evidence" value="ECO:0007669"/>
    <property type="project" value="UniProtKB-UniRule"/>
</dbReference>
<dbReference type="GO" id="GO:0051156">
    <property type="term" value="P:glucose 6-phosphate metabolic process"/>
    <property type="evidence" value="ECO:0007669"/>
    <property type="project" value="TreeGrafter"/>
</dbReference>
<dbReference type="GO" id="GO:0006096">
    <property type="term" value="P:glycolytic process"/>
    <property type="evidence" value="ECO:0007669"/>
    <property type="project" value="UniProtKB-UniRule"/>
</dbReference>
<dbReference type="CDD" id="cd05015">
    <property type="entry name" value="SIS_PGI_1"/>
    <property type="match status" value="1"/>
</dbReference>
<dbReference type="CDD" id="cd05016">
    <property type="entry name" value="SIS_PGI_2"/>
    <property type="match status" value="1"/>
</dbReference>
<dbReference type="FunFam" id="3.40.50.10490:FF:000015">
    <property type="entry name" value="Glucose-6-phosphate isomerase"/>
    <property type="match status" value="1"/>
</dbReference>
<dbReference type="FunFam" id="3.40.50.10490:FF:000016">
    <property type="entry name" value="Glucose-6-phosphate isomerase"/>
    <property type="match status" value="1"/>
</dbReference>
<dbReference type="Gene3D" id="3.40.50.10490">
    <property type="entry name" value="Glucose-6-phosphate isomerase like protein, domain 1"/>
    <property type="match status" value="2"/>
</dbReference>
<dbReference type="HAMAP" id="MF_00473">
    <property type="entry name" value="G6P_isomerase"/>
    <property type="match status" value="1"/>
</dbReference>
<dbReference type="InterPro" id="IPR001672">
    <property type="entry name" value="G6P_Isomerase"/>
</dbReference>
<dbReference type="InterPro" id="IPR018189">
    <property type="entry name" value="Phosphoglucose_isomerase_CS"/>
</dbReference>
<dbReference type="InterPro" id="IPR046348">
    <property type="entry name" value="SIS_dom_sf"/>
</dbReference>
<dbReference type="InterPro" id="IPR035476">
    <property type="entry name" value="SIS_PGI_1"/>
</dbReference>
<dbReference type="InterPro" id="IPR035482">
    <property type="entry name" value="SIS_PGI_2"/>
</dbReference>
<dbReference type="NCBIfam" id="NF010697">
    <property type="entry name" value="PRK14097.1"/>
    <property type="match status" value="1"/>
</dbReference>
<dbReference type="PANTHER" id="PTHR11469">
    <property type="entry name" value="GLUCOSE-6-PHOSPHATE ISOMERASE"/>
    <property type="match status" value="1"/>
</dbReference>
<dbReference type="PANTHER" id="PTHR11469:SF1">
    <property type="entry name" value="GLUCOSE-6-PHOSPHATE ISOMERASE"/>
    <property type="match status" value="1"/>
</dbReference>
<dbReference type="Pfam" id="PF00342">
    <property type="entry name" value="PGI"/>
    <property type="match status" value="1"/>
</dbReference>
<dbReference type="PRINTS" id="PR00662">
    <property type="entry name" value="G6PISOMERASE"/>
</dbReference>
<dbReference type="SUPFAM" id="SSF53697">
    <property type="entry name" value="SIS domain"/>
    <property type="match status" value="1"/>
</dbReference>
<dbReference type="PROSITE" id="PS00765">
    <property type="entry name" value="P_GLUCOSE_ISOMERASE_1"/>
    <property type="match status" value="1"/>
</dbReference>
<dbReference type="PROSITE" id="PS00174">
    <property type="entry name" value="P_GLUCOSE_ISOMERASE_2"/>
    <property type="match status" value="1"/>
</dbReference>
<dbReference type="PROSITE" id="PS51463">
    <property type="entry name" value="P_GLUCOSE_ISOMERASE_3"/>
    <property type="match status" value="1"/>
</dbReference>
<organism>
    <name type="scientific">Streptococcus pyogenes serotype M4 (strain MGAS10750)</name>
    <dbReference type="NCBI Taxonomy" id="370554"/>
    <lineage>
        <taxon>Bacteria</taxon>
        <taxon>Bacillati</taxon>
        <taxon>Bacillota</taxon>
        <taxon>Bacilli</taxon>
        <taxon>Lactobacillales</taxon>
        <taxon>Streptococcaceae</taxon>
        <taxon>Streptococcus</taxon>
    </lineage>
</organism>
<accession>Q1J8N2</accession>
<comment type="function">
    <text evidence="1">Catalyzes the reversible isomerization of glucose-6-phosphate to fructose-6-phosphate.</text>
</comment>
<comment type="catalytic activity">
    <reaction evidence="1">
        <text>alpha-D-glucose 6-phosphate = beta-D-fructose 6-phosphate</text>
        <dbReference type="Rhea" id="RHEA:11816"/>
        <dbReference type="ChEBI" id="CHEBI:57634"/>
        <dbReference type="ChEBI" id="CHEBI:58225"/>
        <dbReference type="EC" id="5.3.1.9"/>
    </reaction>
</comment>
<comment type="pathway">
    <text evidence="1">Carbohydrate biosynthesis; gluconeogenesis.</text>
</comment>
<comment type="pathway">
    <text evidence="1">Carbohydrate degradation; glycolysis; D-glyceraldehyde 3-phosphate and glycerone phosphate from D-glucose: step 2/4.</text>
</comment>
<comment type="subcellular location">
    <subcellularLocation>
        <location evidence="1">Cytoplasm</location>
    </subcellularLocation>
</comment>
<comment type="similarity">
    <text evidence="1">Belongs to the GPI family.</text>
</comment>
<comment type="sequence caution" evidence="2">
    <conflict type="erroneous initiation">
        <sequence resource="EMBL-CDS" id="ABF37129"/>
    </conflict>
</comment>
<sequence length="449" mass="49541">MSHITFDYSKVLESFAGQHEIDFLQGQVTEADKLLREGTGPGSDFLGWLDLPENYDKDEFARILTAAEKIKSDSEVLVVIGIGGSYLGAKAAIDFLNHHFANLQTAKERKAPQILYAGNSISSTYLADLVEYVQDKEFSVNVISKSGTTTEPAIAFRVFKELLVKKYGQEEANKRIYATTDKVKGAVKVEADANNWETFVVPDNVGGRFSVLTAVGLLPIAASGADITALMEGANAARKDLSSDKISENIAYQYAAVRNVLYRKGYITEILANYEPSLQYFGEWWKQLAGESEGKDQKGIYPTSANFSTDLHSLGQFIQEGYRNLFETVIRVDKPRKNVIIPELAEDLDGLGYLQGKDVDFVNKKATDGVLLAHTDGGVPNMFVTLPAQDEFTLGYTIYFFELAIAVSGYMNAVNPFDQPGVEAYKRNMFALLGKPGFEELSAELNARL</sequence>